<name>YOJ3_CAEEL</name>
<sequence length="164" mass="17957">MGIIISLVAPTVSSTISSRLMIGPENNEKDAKNSDRTKYDNLAMLGRSPEQKEHVNPFEKAPVARPTRNTVDSQMMLGPPKKANDQSASDCSIYDNLVVPMSELGPTPGNKPSPNPIEGAPMIRPPQDTVSRAPDNSIYDTLQMTPEVDWSKKMTMKSMKKTGK</sequence>
<feature type="chain" id="PRO_0000065511" description="Uncharacterized protein ZK353.3">
    <location>
        <begin position="1"/>
        <end position="164"/>
    </location>
</feature>
<feature type="region of interest" description="Disordered" evidence="1">
    <location>
        <begin position="46"/>
        <end position="142"/>
    </location>
</feature>
<gene>
    <name type="ORF">ZK353.3</name>
</gene>
<organism>
    <name type="scientific">Caenorhabditis elegans</name>
    <dbReference type="NCBI Taxonomy" id="6239"/>
    <lineage>
        <taxon>Eukaryota</taxon>
        <taxon>Metazoa</taxon>
        <taxon>Ecdysozoa</taxon>
        <taxon>Nematoda</taxon>
        <taxon>Chromadorea</taxon>
        <taxon>Rhabditida</taxon>
        <taxon>Rhabditina</taxon>
        <taxon>Rhabditomorpha</taxon>
        <taxon>Rhabditoidea</taxon>
        <taxon>Rhabditidae</taxon>
        <taxon>Peloderinae</taxon>
        <taxon>Caenorhabditis</taxon>
    </lineage>
</organism>
<protein>
    <recommendedName>
        <fullName>Uncharacterized protein ZK353.3</fullName>
    </recommendedName>
</protein>
<evidence type="ECO:0000256" key="1">
    <source>
        <dbReference type="SAM" id="MobiDB-lite"/>
    </source>
</evidence>
<keyword id="KW-1185">Reference proteome</keyword>
<reference key="1">
    <citation type="journal article" date="1994" name="Nature">
        <title>2.2 Mb of contiguous nucleotide sequence from chromosome III of C. elegans.</title>
        <authorList>
            <person name="Wilson R."/>
            <person name="Ainscough R."/>
            <person name="Anderson K."/>
            <person name="Baynes C."/>
            <person name="Berks M."/>
            <person name="Bonfield J."/>
            <person name="Burton J."/>
            <person name="Connell M."/>
            <person name="Copsey T."/>
            <person name="Cooper J."/>
            <person name="Coulson A."/>
            <person name="Craxton M."/>
            <person name="Dear S."/>
            <person name="Du Z."/>
            <person name="Durbin R."/>
            <person name="Favello A."/>
            <person name="Fraser A."/>
            <person name="Fulton L."/>
            <person name="Gardner A."/>
            <person name="Green P."/>
            <person name="Hawkins T."/>
            <person name="Hillier L."/>
            <person name="Jier M."/>
            <person name="Johnston L."/>
            <person name="Jones M."/>
            <person name="Kershaw J."/>
            <person name="Kirsten J."/>
            <person name="Laisster N."/>
            <person name="Latreille P."/>
            <person name="Lightning J."/>
            <person name="Lloyd C."/>
            <person name="Mortimore B."/>
            <person name="O'Callaghan M."/>
            <person name="Parsons J."/>
            <person name="Percy C."/>
            <person name="Rifken L."/>
            <person name="Roopra A."/>
            <person name="Saunders D."/>
            <person name="Shownkeen R."/>
            <person name="Sims M."/>
            <person name="Smaldon N."/>
            <person name="Smith A."/>
            <person name="Smith M."/>
            <person name="Sonnhammer E."/>
            <person name="Staden R."/>
            <person name="Sulston J."/>
            <person name="Thierry-Mieg J."/>
            <person name="Thomas K."/>
            <person name="Vaudin M."/>
            <person name="Vaughan K."/>
            <person name="Waterston R."/>
            <person name="Watson A."/>
            <person name="Weinstock L."/>
            <person name="Wilkinson-Sproat J."/>
            <person name="Wohldman P."/>
        </authorList>
    </citation>
    <scope>NUCLEOTIDE SEQUENCE [LARGE SCALE GENOMIC DNA]</scope>
    <source>
        <strain>Bristol N2</strain>
    </source>
</reference>
<reference key="2">
    <citation type="journal article" date="1998" name="Science">
        <title>Genome sequence of the nematode C. elegans: a platform for investigating biology.</title>
        <authorList>
            <consortium name="The C. elegans sequencing consortium"/>
        </authorList>
    </citation>
    <scope>NUCLEOTIDE SEQUENCE [LARGE SCALE GENOMIC DNA]</scope>
    <source>
        <strain>Bristol N2</strain>
    </source>
</reference>
<accession>P34626</accession>
<proteinExistence type="predicted"/>
<dbReference type="EMBL" id="FO081668">
    <property type="protein sequence ID" value="CCD73203.1"/>
    <property type="molecule type" value="Genomic_DNA"/>
</dbReference>
<dbReference type="PIR" id="S44659">
    <property type="entry name" value="S44659"/>
</dbReference>
<dbReference type="RefSeq" id="NP_498852.1">
    <property type="nucleotide sequence ID" value="NM_066451.5"/>
</dbReference>
<dbReference type="FunCoup" id="P34626">
    <property type="interactions" value="286"/>
</dbReference>
<dbReference type="STRING" id="6239.ZK353.3.1"/>
<dbReference type="PaxDb" id="6239-ZK353.3"/>
<dbReference type="EnsemblMetazoa" id="ZK353.3.1">
    <property type="protein sequence ID" value="ZK353.3.1"/>
    <property type="gene ID" value="WBGene00022699"/>
</dbReference>
<dbReference type="GeneID" id="191287"/>
<dbReference type="KEGG" id="cel:CELE_ZK353.3"/>
<dbReference type="UCSC" id="ZK353.3">
    <property type="organism name" value="c. elegans"/>
</dbReference>
<dbReference type="AGR" id="WB:WBGene00022699"/>
<dbReference type="CTD" id="191287"/>
<dbReference type="WormBase" id="ZK353.3">
    <property type="protein sequence ID" value="CE00387"/>
    <property type="gene ID" value="WBGene00022699"/>
</dbReference>
<dbReference type="eggNOG" id="ENOG502TJ3M">
    <property type="taxonomic scope" value="Eukaryota"/>
</dbReference>
<dbReference type="HOGENOM" id="CLU_1620534_0_0_1"/>
<dbReference type="InParanoid" id="P34626"/>
<dbReference type="OMA" id="MTPEVDW"/>
<dbReference type="OrthoDB" id="5819102at2759"/>
<dbReference type="PRO" id="PR:P34626"/>
<dbReference type="Proteomes" id="UP000001940">
    <property type="component" value="Chromosome III"/>
</dbReference>
<dbReference type="Bgee" id="WBGene00022699">
    <property type="expression patterns" value="Expressed in material anatomical entity and 2 other cell types or tissues"/>
</dbReference>